<reference key="1">
    <citation type="journal article" date="2005" name="Nucleic Acids Res.">
        <title>Genomic blueprint of Hahella chejuensis, a marine microbe producing an algicidal agent.</title>
        <authorList>
            <person name="Jeong H."/>
            <person name="Yim J.H."/>
            <person name="Lee C."/>
            <person name="Choi S.-H."/>
            <person name="Park Y.K."/>
            <person name="Yoon S.H."/>
            <person name="Hur C.-G."/>
            <person name="Kang H.-Y."/>
            <person name="Kim D."/>
            <person name="Lee H.H."/>
            <person name="Park K.H."/>
            <person name="Park S.-H."/>
            <person name="Park H.-S."/>
            <person name="Lee H.K."/>
            <person name="Oh T.K."/>
            <person name="Kim J.F."/>
        </authorList>
    </citation>
    <scope>NUCLEOTIDE SEQUENCE [LARGE SCALE GENOMIC DNA]</scope>
    <source>
        <strain>KCTC 2396</strain>
    </source>
</reference>
<proteinExistence type="inferred from homology"/>
<organism>
    <name type="scientific">Hahella chejuensis (strain KCTC 2396)</name>
    <dbReference type="NCBI Taxonomy" id="349521"/>
    <lineage>
        <taxon>Bacteria</taxon>
        <taxon>Pseudomonadati</taxon>
        <taxon>Pseudomonadota</taxon>
        <taxon>Gammaproteobacteria</taxon>
        <taxon>Oceanospirillales</taxon>
        <taxon>Hahellaceae</taxon>
        <taxon>Hahella</taxon>
    </lineage>
</organism>
<name>LEUD_HAHCH</name>
<sequence length="215" mass="24429">MKKFTQVTGVVAPIDRANVDTDMIIPKQFLKSIKRSGFGPNLFDELRYLDEGQPDADCSKRPINPDFVLNQPRYQGASIMLARRNFGCGSSREHAPWALDDYGFRAVIAPSFADIFFNNCFKNGLLPIVLEEKEVDKLFEETLATEGYQLTVDLERKKVVKPDGTELSFEVDEFRQHCLLKGLDEIGVTLEDRDAIGAYEERRKAEAPWMFLGVQ</sequence>
<protein>
    <recommendedName>
        <fullName evidence="1">3-isopropylmalate dehydratase small subunit</fullName>
        <ecNumber evidence="1">4.2.1.33</ecNumber>
    </recommendedName>
    <alternativeName>
        <fullName evidence="1">Alpha-IPM isomerase</fullName>
        <shortName evidence="1">IPMI</shortName>
    </alternativeName>
    <alternativeName>
        <fullName evidence="1">Isopropylmalate isomerase</fullName>
    </alternativeName>
</protein>
<comment type="function">
    <text evidence="1">Catalyzes the isomerization between 2-isopropylmalate and 3-isopropylmalate, via the formation of 2-isopropylmaleate.</text>
</comment>
<comment type="catalytic activity">
    <reaction evidence="1">
        <text>(2R,3S)-3-isopropylmalate = (2S)-2-isopropylmalate</text>
        <dbReference type="Rhea" id="RHEA:32287"/>
        <dbReference type="ChEBI" id="CHEBI:1178"/>
        <dbReference type="ChEBI" id="CHEBI:35121"/>
        <dbReference type="EC" id="4.2.1.33"/>
    </reaction>
</comment>
<comment type="pathway">
    <text evidence="1">Amino-acid biosynthesis; L-leucine biosynthesis; L-leucine from 3-methyl-2-oxobutanoate: step 2/4.</text>
</comment>
<comment type="subunit">
    <text evidence="1">Heterodimer of LeuC and LeuD.</text>
</comment>
<comment type="similarity">
    <text evidence="1">Belongs to the LeuD family. LeuD type 1 subfamily.</text>
</comment>
<keyword id="KW-0028">Amino-acid biosynthesis</keyword>
<keyword id="KW-0100">Branched-chain amino acid biosynthesis</keyword>
<keyword id="KW-0432">Leucine biosynthesis</keyword>
<keyword id="KW-0456">Lyase</keyword>
<keyword id="KW-1185">Reference proteome</keyword>
<feature type="chain" id="PRO_1000063774" description="3-isopropylmalate dehydratase small subunit">
    <location>
        <begin position="1"/>
        <end position="215"/>
    </location>
</feature>
<dbReference type="EC" id="4.2.1.33" evidence="1"/>
<dbReference type="EMBL" id="CP000155">
    <property type="protein sequence ID" value="ABC29237.1"/>
    <property type="molecule type" value="Genomic_DNA"/>
</dbReference>
<dbReference type="RefSeq" id="WP_011396306.1">
    <property type="nucleotide sequence ID" value="NC_007645.1"/>
</dbReference>
<dbReference type="SMR" id="Q2SJD7"/>
<dbReference type="STRING" id="349521.HCH_02429"/>
<dbReference type="KEGG" id="hch:HCH_02429"/>
<dbReference type="eggNOG" id="COG0066">
    <property type="taxonomic scope" value="Bacteria"/>
</dbReference>
<dbReference type="HOGENOM" id="CLU_081378_0_3_6"/>
<dbReference type="OrthoDB" id="9777465at2"/>
<dbReference type="UniPathway" id="UPA00048">
    <property type="reaction ID" value="UER00071"/>
</dbReference>
<dbReference type="Proteomes" id="UP000000238">
    <property type="component" value="Chromosome"/>
</dbReference>
<dbReference type="GO" id="GO:0009316">
    <property type="term" value="C:3-isopropylmalate dehydratase complex"/>
    <property type="evidence" value="ECO:0007669"/>
    <property type="project" value="InterPro"/>
</dbReference>
<dbReference type="GO" id="GO:0003861">
    <property type="term" value="F:3-isopropylmalate dehydratase activity"/>
    <property type="evidence" value="ECO:0007669"/>
    <property type="project" value="UniProtKB-UniRule"/>
</dbReference>
<dbReference type="GO" id="GO:0009098">
    <property type="term" value="P:L-leucine biosynthetic process"/>
    <property type="evidence" value="ECO:0007669"/>
    <property type="project" value="UniProtKB-UniRule"/>
</dbReference>
<dbReference type="CDD" id="cd01577">
    <property type="entry name" value="IPMI_Swivel"/>
    <property type="match status" value="1"/>
</dbReference>
<dbReference type="FunFam" id="3.20.19.10:FF:000003">
    <property type="entry name" value="3-isopropylmalate dehydratase small subunit"/>
    <property type="match status" value="1"/>
</dbReference>
<dbReference type="Gene3D" id="3.20.19.10">
    <property type="entry name" value="Aconitase, domain 4"/>
    <property type="match status" value="1"/>
</dbReference>
<dbReference type="HAMAP" id="MF_01031">
    <property type="entry name" value="LeuD_type1"/>
    <property type="match status" value="1"/>
</dbReference>
<dbReference type="InterPro" id="IPR004431">
    <property type="entry name" value="3-IsopropMal_deHydase_ssu"/>
</dbReference>
<dbReference type="InterPro" id="IPR015928">
    <property type="entry name" value="Aconitase/3IPM_dehydase_swvl"/>
</dbReference>
<dbReference type="InterPro" id="IPR000573">
    <property type="entry name" value="AconitaseA/IPMdHydase_ssu_swvl"/>
</dbReference>
<dbReference type="InterPro" id="IPR033940">
    <property type="entry name" value="IPMI_Swivel"/>
</dbReference>
<dbReference type="InterPro" id="IPR050075">
    <property type="entry name" value="LeuD"/>
</dbReference>
<dbReference type="NCBIfam" id="TIGR00171">
    <property type="entry name" value="leuD"/>
    <property type="match status" value="1"/>
</dbReference>
<dbReference type="NCBIfam" id="NF002458">
    <property type="entry name" value="PRK01641.1"/>
    <property type="match status" value="1"/>
</dbReference>
<dbReference type="PANTHER" id="PTHR43345:SF5">
    <property type="entry name" value="3-ISOPROPYLMALATE DEHYDRATASE SMALL SUBUNIT"/>
    <property type="match status" value="1"/>
</dbReference>
<dbReference type="PANTHER" id="PTHR43345">
    <property type="entry name" value="3-ISOPROPYLMALATE DEHYDRATASE SMALL SUBUNIT 2-RELATED-RELATED"/>
    <property type="match status" value="1"/>
</dbReference>
<dbReference type="Pfam" id="PF00694">
    <property type="entry name" value="Aconitase_C"/>
    <property type="match status" value="1"/>
</dbReference>
<dbReference type="SUPFAM" id="SSF52016">
    <property type="entry name" value="LeuD/IlvD-like"/>
    <property type="match status" value="1"/>
</dbReference>
<evidence type="ECO:0000255" key="1">
    <source>
        <dbReference type="HAMAP-Rule" id="MF_01031"/>
    </source>
</evidence>
<accession>Q2SJD7</accession>
<gene>
    <name evidence="1" type="primary">leuD</name>
    <name type="ordered locus">HCH_02429</name>
</gene>